<keyword id="KW-0002">3D-structure</keyword>
<keyword id="KW-0966">Cell projection</keyword>
<keyword id="KW-0160">Chromosomal rearrangement</keyword>
<keyword id="KW-0963">Cytoplasm</keyword>
<keyword id="KW-0968">Cytoplasmic vesicle</keyword>
<keyword id="KW-0206">Cytoskeleton</keyword>
<keyword id="KW-0225">Disease variant</keyword>
<keyword id="KW-0333">Golgi apparatus</keyword>
<keyword id="KW-1016">Hypogonadotropic hypogonadism</keyword>
<keyword id="KW-0991">Intellectual disability</keyword>
<keyword id="KW-0956">Kallmann syndrome</keyword>
<keyword id="KW-0539">Nucleus</keyword>
<keyword id="KW-0597">Phosphoprotein</keyword>
<keyword id="KW-1267">Proteomics identification</keyword>
<keyword id="KW-0656">Proto-oncogene</keyword>
<keyword id="KW-1185">Reference proteome</keyword>
<keyword id="KW-0677">Repeat</keyword>
<keyword id="KW-0853">WD repeat</keyword>
<feature type="chain" id="PRO_0000050889" description="WD repeat-containing protein 11">
    <location>
        <begin position="1"/>
        <end position="1224"/>
    </location>
</feature>
<feature type="repeat" description="WD 1">
    <location>
        <begin position="59"/>
        <end position="108"/>
    </location>
</feature>
<feature type="repeat" description="WD 2">
    <location>
        <begin position="111"/>
        <end position="154"/>
    </location>
</feature>
<feature type="repeat" description="WD 3">
    <location>
        <begin position="354"/>
        <end position="393"/>
    </location>
</feature>
<feature type="repeat" description="WD 4">
    <location>
        <begin position="471"/>
        <end position="510"/>
    </location>
</feature>
<feature type="repeat" description="WD 5">
    <location>
        <begin position="566"/>
        <end position="605"/>
    </location>
</feature>
<feature type="repeat" description="WD 6">
    <location>
        <begin position="708"/>
        <end position="745"/>
    </location>
</feature>
<feature type="repeat" description="WD 7">
    <location>
        <begin position="747"/>
        <end position="787"/>
    </location>
</feature>
<feature type="repeat" description="WD 8">
    <location>
        <begin position="793"/>
        <end position="831"/>
    </location>
</feature>
<feature type="repeat" description="WD 9">
    <location>
        <begin position="893"/>
        <end position="940"/>
    </location>
</feature>
<feature type="modified residue" description="Phosphoserine" evidence="9">
    <location>
        <position position="205"/>
    </location>
</feature>
<feature type="modified residue" description="Phosphoserine" evidence="9">
    <location>
        <position position="209"/>
    </location>
</feature>
<feature type="modified residue" description="Phosphoserine" evidence="1">
    <location>
        <position position="402"/>
    </location>
</feature>
<feature type="modified residue" description="Phosphoserine" evidence="1">
    <location>
        <position position="406"/>
    </location>
</feature>
<feature type="sequence variant" id="VAR_069194" description="In HH14; does not affect the interaction with EMX1; does not affect the subcellular location of the protein; decreases capacity to shuttle from cilium to nucleus; decreases GLI3 protein levels; dbSNP:rs201051480." evidence="3 5">
    <original>R</original>
    <variation>W</variation>
    <location>
        <position position="395"/>
    </location>
</feature>
<feature type="sequence variant" id="VAR_088097" description="In MRT78; no protein detected in homozygous patient cells." evidence="7">
    <location>
        <begin position="419"/>
        <end position="1224"/>
    </location>
</feature>
<feature type="sequence variant" id="VAR_069195" description="In HH14; abolishes the interaction with EMX1; does not affect the subcellular location of the protein; decreases capacity to shuttle from cilium to nucleus; decreases interaction with EMX1; decreases GLI3 protein levels; dbSNP:rs318240760." evidence="3 5">
    <original>A</original>
    <variation>T</variation>
    <location>
        <position position="435"/>
    </location>
</feature>
<feature type="sequence variant" id="VAR_069196" description="In HH14; reduces the interaction with EMX1; does not affect the subcellular location of the protein; decreases capacity to shuttle from cilium to nucleus; decreases GLI3 protein levels; dbSNP:rs144440500." evidence="3 5">
    <original>R</original>
    <variation>Q</variation>
    <location>
        <position position="448"/>
    </location>
</feature>
<feature type="sequence variant" id="VAR_080856" description="In HH14; mild phenotype; decreases capacity to shuttle from cilium to nucleus; decreases interaction with EMX1; no effect on GLI3 protein levels; dbSNP:rs761599645." evidence="5">
    <original>P</original>
    <variation>L</variation>
    <location>
        <position position="537"/>
    </location>
</feature>
<feature type="sequence variant" id="VAR_069197" description="In HH14; abolishes the interaction with EMX1; decreases capacity to shuttle from cilium to nucleus; decreases interaction with EMX1; decreases GLI3 protein levels; dbSNP:rs318240761." evidence="3 5">
    <original>H</original>
    <variation>Q</variation>
    <location>
        <position position="690"/>
    </location>
</feature>
<feature type="sequence variant" id="VAR_069198" description="In dbSNP:rs144531702." evidence="3">
    <original>K</original>
    <variation>Q</variation>
    <location>
        <position position="978"/>
    </location>
</feature>
<feature type="sequence variant" id="VAR_069199" description="In HH14; does not affect the subcellular location of the protein; decreases capacity to shuttle from cilium to nucleus; decreases GLI3 protein levels; dbSNP:rs139007744." evidence="3 5">
    <original>F</original>
    <variation>L</variation>
    <location>
        <position position="1150"/>
    </location>
</feature>
<feature type="helix" evidence="11">
    <location>
        <begin position="21"/>
        <end position="23"/>
    </location>
</feature>
<feature type="strand" evidence="11">
    <location>
        <begin position="27"/>
        <end position="29"/>
    </location>
</feature>
<feature type="strand" evidence="11">
    <location>
        <begin position="33"/>
        <end position="38"/>
    </location>
</feature>
<feature type="strand" evidence="11">
    <location>
        <begin position="43"/>
        <end position="50"/>
    </location>
</feature>
<feature type="strand" evidence="11">
    <location>
        <begin position="53"/>
        <end position="57"/>
    </location>
</feature>
<feature type="strand" evidence="11">
    <location>
        <begin position="64"/>
        <end position="69"/>
    </location>
</feature>
<feature type="strand" evidence="11">
    <location>
        <begin position="77"/>
        <end position="80"/>
    </location>
</feature>
<feature type="strand" evidence="11">
    <location>
        <begin position="86"/>
        <end position="90"/>
    </location>
</feature>
<feature type="strand" evidence="11">
    <location>
        <begin position="93"/>
        <end position="98"/>
    </location>
</feature>
<feature type="turn" evidence="10">
    <location>
        <begin position="100"/>
        <end position="103"/>
    </location>
</feature>
<feature type="strand" evidence="11">
    <location>
        <begin position="105"/>
        <end position="110"/>
    </location>
</feature>
<feature type="strand" evidence="11">
    <location>
        <begin position="112"/>
        <end position="114"/>
    </location>
</feature>
<feature type="strand" evidence="11">
    <location>
        <begin position="118"/>
        <end position="121"/>
    </location>
</feature>
<feature type="strand" evidence="11">
    <location>
        <begin position="131"/>
        <end position="136"/>
    </location>
</feature>
<feature type="turn" evidence="11">
    <location>
        <begin position="137"/>
        <end position="139"/>
    </location>
</feature>
<feature type="strand" evidence="11">
    <location>
        <begin position="140"/>
        <end position="145"/>
    </location>
</feature>
<feature type="turn" evidence="11">
    <location>
        <begin position="146"/>
        <end position="148"/>
    </location>
</feature>
<feature type="strand" evidence="11">
    <location>
        <begin position="153"/>
        <end position="156"/>
    </location>
</feature>
<feature type="strand" evidence="11">
    <location>
        <begin position="161"/>
        <end position="166"/>
    </location>
</feature>
<feature type="strand" evidence="11">
    <location>
        <begin position="174"/>
        <end position="180"/>
    </location>
</feature>
<feature type="strand" evidence="11">
    <location>
        <begin position="182"/>
        <end position="186"/>
    </location>
</feature>
<feature type="strand" evidence="11">
    <location>
        <begin position="190"/>
        <end position="192"/>
    </location>
</feature>
<feature type="strand" evidence="11">
    <location>
        <begin position="199"/>
        <end position="201"/>
    </location>
</feature>
<feature type="strand" evidence="11">
    <location>
        <begin position="249"/>
        <end position="252"/>
    </location>
</feature>
<feature type="strand" evidence="11">
    <location>
        <begin position="254"/>
        <end position="256"/>
    </location>
</feature>
<feature type="strand" evidence="11">
    <location>
        <begin position="259"/>
        <end position="263"/>
    </location>
</feature>
<feature type="strand" evidence="11">
    <location>
        <begin position="265"/>
        <end position="272"/>
    </location>
</feature>
<feature type="turn" evidence="11">
    <location>
        <begin position="273"/>
        <end position="276"/>
    </location>
</feature>
<feature type="strand" evidence="11">
    <location>
        <begin position="277"/>
        <end position="283"/>
    </location>
</feature>
<feature type="strand" evidence="11">
    <location>
        <begin position="286"/>
        <end position="288"/>
    </location>
</feature>
<feature type="strand" evidence="11">
    <location>
        <begin position="291"/>
        <end position="296"/>
    </location>
</feature>
<feature type="strand" evidence="11">
    <location>
        <begin position="298"/>
        <end position="307"/>
    </location>
</feature>
<feature type="strand" evidence="11">
    <location>
        <begin position="312"/>
        <end position="317"/>
    </location>
</feature>
<feature type="strand" evidence="11">
    <location>
        <begin position="341"/>
        <end position="346"/>
    </location>
</feature>
<feature type="strand" evidence="11">
    <location>
        <begin position="358"/>
        <end position="363"/>
    </location>
</feature>
<feature type="turn" evidence="11">
    <location>
        <begin position="365"/>
        <end position="367"/>
    </location>
</feature>
<feature type="strand" evidence="11">
    <location>
        <begin position="370"/>
        <end position="375"/>
    </location>
</feature>
<feature type="strand" evidence="11">
    <location>
        <begin position="380"/>
        <end position="388"/>
    </location>
</feature>
<feature type="strand" evidence="11">
    <location>
        <begin position="408"/>
        <end position="410"/>
    </location>
</feature>
<feature type="strand" evidence="11">
    <location>
        <begin position="417"/>
        <end position="419"/>
    </location>
</feature>
<feature type="helix" evidence="10">
    <location>
        <begin position="423"/>
        <end position="425"/>
    </location>
</feature>
<feature type="helix" evidence="11">
    <location>
        <begin position="427"/>
        <end position="429"/>
    </location>
</feature>
<feature type="strand" evidence="11">
    <location>
        <begin position="451"/>
        <end position="460"/>
    </location>
</feature>
<feature type="strand" evidence="11">
    <location>
        <begin position="469"/>
        <end position="472"/>
    </location>
</feature>
<feature type="strand" evidence="11">
    <location>
        <begin position="478"/>
        <end position="480"/>
    </location>
</feature>
<feature type="turn" evidence="11">
    <location>
        <begin position="481"/>
        <end position="483"/>
    </location>
</feature>
<feature type="strand" evidence="11">
    <location>
        <begin position="488"/>
        <end position="491"/>
    </location>
</feature>
<feature type="strand" evidence="11">
    <location>
        <begin position="495"/>
        <end position="500"/>
    </location>
</feature>
<feature type="strand" evidence="11">
    <location>
        <begin position="502"/>
        <end position="504"/>
    </location>
</feature>
<feature type="strand" evidence="11">
    <location>
        <begin position="507"/>
        <end position="512"/>
    </location>
</feature>
<feature type="strand" evidence="11">
    <location>
        <begin position="518"/>
        <end position="534"/>
    </location>
</feature>
<feature type="strand" evidence="11">
    <location>
        <begin position="545"/>
        <end position="551"/>
    </location>
</feature>
<feature type="turn" evidence="11">
    <location>
        <begin position="552"/>
        <end position="554"/>
    </location>
</feature>
<feature type="strand" evidence="11">
    <location>
        <begin position="557"/>
        <end position="561"/>
    </location>
</feature>
<feature type="strand" evidence="11">
    <location>
        <begin position="571"/>
        <end position="576"/>
    </location>
</feature>
<feature type="strand" evidence="11">
    <location>
        <begin position="582"/>
        <end position="590"/>
    </location>
</feature>
<feature type="strand" evidence="11">
    <location>
        <begin position="593"/>
        <end position="596"/>
    </location>
</feature>
<feature type="turn" evidence="11">
    <location>
        <begin position="597"/>
        <end position="599"/>
    </location>
</feature>
<feature type="strand" evidence="10">
    <location>
        <begin position="602"/>
        <end position="605"/>
    </location>
</feature>
<feature type="strand" evidence="11">
    <location>
        <begin position="614"/>
        <end position="618"/>
    </location>
</feature>
<feature type="strand" evidence="11">
    <location>
        <begin position="677"/>
        <end position="682"/>
    </location>
</feature>
<feature type="strand" evidence="11">
    <location>
        <begin position="688"/>
        <end position="694"/>
    </location>
</feature>
<feature type="strand" evidence="11">
    <location>
        <begin position="697"/>
        <end position="704"/>
    </location>
</feature>
<feature type="strand" evidence="11">
    <location>
        <begin position="713"/>
        <end position="719"/>
    </location>
</feature>
<feature type="strand" evidence="11">
    <location>
        <begin position="722"/>
        <end position="736"/>
    </location>
</feature>
<feature type="turn" evidence="11">
    <location>
        <begin position="737"/>
        <end position="739"/>
    </location>
</feature>
<feature type="strand" evidence="11">
    <location>
        <begin position="744"/>
        <end position="746"/>
    </location>
</feature>
<feature type="strand" evidence="11">
    <location>
        <begin position="752"/>
        <end position="757"/>
    </location>
</feature>
<feature type="strand" evidence="11">
    <location>
        <begin position="765"/>
        <end position="781"/>
    </location>
</feature>
<feature type="strand" evidence="11">
    <location>
        <begin position="786"/>
        <end position="790"/>
    </location>
</feature>
<feature type="turn" evidence="11">
    <location>
        <begin position="791"/>
        <end position="793"/>
    </location>
</feature>
<feature type="strand" evidence="11">
    <location>
        <begin position="794"/>
        <end position="796"/>
    </location>
</feature>
<feature type="strand" evidence="11">
    <location>
        <begin position="798"/>
        <end position="807"/>
    </location>
</feature>
<feature type="strand" evidence="11">
    <location>
        <begin position="809"/>
        <end position="813"/>
    </location>
</feature>
<feature type="strand" evidence="11">
    <location>
        <begin position="818"/>
        <end position="821"/>
    </location>
</feature>
<feature type="strand" evidence="10">
    <location>
        <begin position="832"/>
        <end position="834"/>
    </location>
</feature>
<feature type="helix" evidence="11">
    <location>
        <begin position="844"/>
        <end position="846"/>
    </location>
</feature>
<feature type="helix" evidence="11">
    <location>
        <begin position="849"/>
        <end position="860"/>
    </location>
</feature>
<feature type="strand" evidence="11">
    <location>
        <begin position="865"/>
        <end position="867"/>
    </location>
</feature>
<feature type="helix" evidence="11">
    <location>
        <begin position="872"/>
        <end position="874"/>
    </location>
</feature>
<feature type="helix" evidence="11">
    <location>
        <begin position="881"/>
        <end position="891"/>
    </location>
</feature>
<feature type="helix" evidence="11">
    <location>
        <begin position="896"/>
        <end position="902"/>
    </location>
</feature>
<feature type="helix" evidence="11">
    <location>
        <begin position="909"/>
        <end position="920"/>
    </location>
</feature>
<feature type="helix" evidence="11">
    <location>
        <begin position="924"/>
        <end position="940"/>
    </location>
</feature>
<feature type="helix" evidence="11">
    <location>
        <begin position="965"/>
        <end position="970"/>
    </location>
</feature>
<feature type="helix" evidence="11">
    <location>
        <begin position="973"/>
        <end position="989"/>
    </location>
</feature>
<feature type="helix" evidence="11">
    <location>
        <begin position="994"/>
        <end position="1006"/>
    </location>
</feature>
<feature type="helix" evidence="11">
    <location>
        <begin position="1011"/>
        <end position="1017"/>
    </location>
</feature>
<feature type="helix" evidence="11">
    <location>
        <begin position="1027"/>
        <end position="1039"/>
    </location>
</feature>
<feature type="strand" evidence="11">
    <location>
        <begin position="1044"/>
        <end position="1046"/>
    </location>
</feature>
<feature type="helix" evidence="11">
    <location>
        <begin position="1048"/>
        <end position="1060"/>
    </location>
</feature>
<feature type="helix" evidence="11">
    <location>
        <begin position="1063"/>
        <end position="1073"/>
    </location>
</feature>
<feature type="helix" evidence="11">
    <location>
        <begin position="1077"/>
        <end position="1085"/>
    </location>
</feature>
<feature type="helix" evidence="11">
    <location>
        <begin position="1089"/>
        <end position="1098"/>
    </location>
</feature>
<feature type="turn" evidence="11">
    <location>
        <begin position="1102"/>
        <end position="1104"/>
    </location>
</feature>
<feature type="helix" evidence="11">
    <location>
        <begin position="1105"/>
        <end position="1116"/>
    </location>
</feature>
<feature type="turn" evidence="11">
    <location>
        <begin position="1119"/>
        <end position="1121"/>
    </location>
</feature>
<feature type="helix" evidence="11">
    <location>
        <begin position="1124"/>
        <end position="1133"/>
    </location>
</feature>
<feature type="helix" evidence="11">
    <location>
        <begin position="1137"/>
        <end position="1146"/>
    </location>
</feature>
<feature type="helix" evidence="11">
    <location>
        <begin position="1152"/>
        <end position="1163"/>
    </location>
</feature>
<feature type="turn" evidence="11">
    <location>
        <begin position="1170"/>
        <end position="1172"/>
    </location>
</feature>
<feature type="helix" evidence="11">
    <location>
        <begin position="1173"/>
        <end position="1188"/>
    </location>
</feature>
<feature type="turn" evidence="11">
    <location>
        <begin position="1189"/>
        <end position="1191"/>
    </location>
</feature>
<feature type="helix" evidence="11">
    <location>
        <begin position="1193"/>
        <end position="1203"/>
    </location>
</feature>
<feature type="helix" evidence="10">
    <location>
        <begin position="1205"/>
        <end position="1207"/>
    </location>
</feature>
<feature type="helix" evidence="11">
    <location>
        <begin position="1208"/>
        <end position="1214"/>
    </location>
</feature>
<reference key="1">
    <citation type="journal article" date="2001" name="Oncogene">
        <title>A novel member of the WD-repeat gene family, WDR11, maps to the 10q26 region and is disrupted by a chromosome translocation in human glioblastoma cells.</title>
        <authorList>
            <person name="Chernova O.B."/>
            <person name="Hunyadi A."/>
            <person name="Malaj E."/>
            <person name="Pan H."/>
            <person name="Crooks C."/>
            <person name="Roe B."/>
            <person name="Cowell J.K."/>
        </authorList>
    </citation>
    <scope>NUCLEOTIDE SEQUENCE [MRNA]</scope>
    <scope>CHROMOSOMAL TRANSLOCATION WITH ZNF320</scope>
</reference>
<reference key="2">
    <citation type="journal article" date="2000" name="DNA Res.">
        <title>Prediction of the coding sequences of unidentified human genes. XVI. The complete sequences of 150 new cDNA clones from brain which code for large proteins in vitro.</title>
        <authorList>
            <person name="Nagase T."/>
            <person name="Kikuno R."/>
            <person name="Ishikawa K."/>
            <person name="Hirosawa M."/>
            <person name="Ohara O."/>
        </authorList>
    </citation>
    <scope>NUCLEOTIDE SEQUENCE [LARGE SCALE MRNA]</scope>
    <source>
        <tissue>Brain</tissue>
    </source>
</reference>
<reference key="3">
    <citation type="journal article" date="2002" name="DNA Res.">
        <title>Construction of expression-ready cDNA clones for KIAA genes: manual curation of 330 KIAA cDNA clones.</title>
        <authorList>
            <person name="Nakajima D."/>
            <person name="Okazaki N."/>
            <person name="Yamakawa H."/>
            <person name="Kikuno R."/>
            <person name="Ohara O."/>
            <person name="Nagase T."/>
        </authorList>
    </citation>
    <scope>SEQUENCE REVISION</scope>
</reference>
<reference key="4">
    <citation type="journal article" date="2004" name="Nature">
        <title>The DNA sequence and comparative analysis of human chromosome 10.</title>
        <authorList>
            <person name="Deloukas P."/>
            <person name="Earthrowl M.E."/>
            <person name="Grafham D.V."/>
            <person name="Rubenfield M."/>
            <person name="French L."/>
            <person name="Steward C.A."/>
            <person name="Sims S.K."/>
            <person name="Jones M.C."/>
            <person name="Searle S."/>
            <person name="Scott C."/>
            <person name="Howe K."/>
            <person name="Hunt S.E."/>
            <person name="Andrews T.D."/>
            <person name="Gilbert J.G.R."/>
            <person name="Swarbreck D."/>
            <person name="Ashurst J.L."/>
            <person name="Taylor A."/>
            <person name="Battles J."/>
            <person name="Bird C.P."/>
            <person name="Ainscough R."/>
            <person name="Almeida J.P."/>
            <person name="Ashwell R.I.S."/>
            <person name="Ambrose K.D."/>
            <person name="Babbage A.K."/>
            <person name="Bagguley C.L."/>
            <person name="Bailey J."/>
            <person name="Banerjee R."/>
            <person name="Bates K."/>
            <person name="Beasley H."/>
            <person name="Bray-Allen S."/>
            <person name="Brown A.J."/>
            <person name="Brown J.Y."/>
            <person name="Burford D.C."/>
            <person name="Burrill W."/>
            <person name="Burton J."/>
            <person name="Cahill P."/>
            <person name="Camire D."/>
            <person name="Carter N.P."/>
            <person name="Chapman J.C."/>
            <person name="Clark S.Y."/>
            <person name="Clarke G."/>
            <person name="Clee C.M."/>
            <person name="Clegg S."/>
            <person name="Corby N."/>
            <person name="Coulson A."/>
            <person name="Dhami P."/>
            <person name="Dutta I."/>
            <person name="Dunn M."/>
            <person name="Faulkner L."/>
            <person name="Frankish A."/>
            <person name="Frankland J.A."/>
            <person name="Garner P."/>
            <person name="Garnett J."/>
            <person name="Gribble S."/>
            <person name="Griffiths C."/>
            <person name="Grocock R."/>
            <person name="Gustafson E."/>
            <person name="Hammond S."/>
            <person name="Harley J.L."/>
            <person name="Hart E."/>
            <person name="Heath P.D."/>
            <person name="Ho T.P."/>
            <person name="Hopkins B."/>
            <person name="Horne J."/>
            <person name="Howden P.J."/>
            <person name="Huckle E."/>
            <person name="Hynds C."/>
            <person name="Johnson C."/>
            <person name="Johnson D."/>
            <person name="Kana A."/>
            <person name="Kay M."/>
            <person name="Kimberley A.M."/>
            <person name="Kershaw J.K."/>
            <person name="Kokkinaki M."/>
            <person name="Laird G.K."/>
            <person name="Lawlor S."/>
            <person name="Lee H.M."/>
            <person name="Leongamornlert D.A."/>
            <person name="Laird G."/>
            <person name="Lloyd C."/>
            <person name="Lloyd D.M."/>
            <person name="Loveland J."/>
            <person name="Lovell J."/>
            <person name="McLaren S."/>
            <person name="McLay K.E."/>
            <person name="McMurray A."/>
            <person name="Mashreghi-Mohammadi M."/>
            <person name="Matthews L."/>
            <person name="Milne S."/>
            <person name="Nickerson T."/>
            <person name="Nguyen M."/>
            <person name="Overton-Larty E."/>
            <person name="Palmer S.A."/>
            <person name="Pearce A.V."/>
            <person name="Peck A.I."/>
            <person name="Pelan S."/>
            <person name="Phillimore B."/>
            <person name="Porter K."/>
            <person name="Rice C.M."/>
            <person name="Rogosin A."/>
            <person name="Ross M.T."/>
            <person name="Sarafidou T."/>
            <person name="Sehra H.K."/>
            <person name="Shownkeen R."/>
            <person name="Skuce C.D."/>
            <person name="Smith M."/>
            <person name="Standring L."/>
            <person name="Sycamore N."/>
            <person name="Tester J."/>
            <person name="Thorpe A."/>
            <person name="Torcasso W."/>
            <person name="Tracey A."/>
            <person name="Tromans A."/>
            <person name="Tsolas J."/>
            <person name="Wall M."/>
            <person name="Walsh J."/>
            <person name="Wang H."/>
            <person name="Weinstock K."/>
            <person name="West A.P."/>
            <person name="Willey D.L."/>
            <person name="Whitehead S.L."/>
            <person name="Wilming L."/>
            <person name="Wray P.W."/>
            <person name="Young L."/>
            <person name="Chen Y."/>
            <person name="Lovering R.C."/>
            <person name="Moschonas N.K."/>
            <person name="Siebert R."/>
            <person name="Fechtel K."/>
            <person name="Bentley D."/>
            <person name="Durbin R.M."/>
            <person name="Hubbard T."/>
            <person name="Doucette-Stamm L."/>
            <person name="Beck S."/>
            <person name="Smith D.R."/>
            <person name="Rogers J."/>
        </authorList>
    </citation>
    <scope>NUCLEOTIDE SEQUENCE [LARGE SCALE GENOMIC DNA]</scope>
</reference>
<reference key="5">
    <citation type="journal article" date="2004" name="Genome Res.">
        <title>The status, quality, and expansion of the NIH full-length cDNA project: the Mammalian Gene Collection (MGC).</title>
        <authorList>
            <consortium name="The MGC Project Team"/>
        </authorList>
    </citation>
    <scope>NUCLEOTIDE SEQUENCE [LARGE SCALE MRNA]</scope>
    <source>
        <tissue>Placenta</tissue>
    </source>
</reference>
<reference key="6">
    <citation type="journal article" date="2008" name="Mol. Cell">
        <title>Kinase-selective enrichment enables quantitative phosphoproteomics of the kinome across the cell cycle.</title>
        <authorList>
            <person name="Daub H."/>
            <person name="Olsen J.V."/>
            <person name="Bairlein M."/>
            <person name="Gnad F."/>
            <person name="Oppermann F.S."/>
            <person name="Korner R."/>
            <person name="Greff Z."/>
            <person name="Keri G."/>
            <person name="Stemmann O."/>
            <person name="Mann M."/>
        </authorList>
    </citation>
    <scope>IDENTIFICATION BY MASS SPECTROMETRY [LARGE SCALE ANALYSIS]</scope>
    <source>
        <tissue>Cervix carcinoma</tissue>
    </source>
</reference>
<reference key="7">
    <citation type="journal article" date="2008" name="Proc. Natl. Acad. Sci. U.S.A.">
        <title>A quantitative atlas of mitotic phosphorylation.</title>
        <authorList>
            <person name="Dephoure N."/>
            <person name="Zhou C."/>
            <person name="Villen J."/>
            <person name="Beausoleil S.A."/>
            <person name="Bakalarski C.E."/>
            <person name="Elledge S.J."/>
            <person name="Gygi S.P."/>
        </authorList>
    </citation>
    <scope>IDENTIFICATION BY MASS SPECTROMETRY [LARGE SCALE ANALYSIS]</scope>
    <source>
        <tissue>Cervix carcinoma</tissue>
    </source>
</reference>
<reference key="8">
    <citation type="journal article" date="2010" name="Am. J. Hum. Genet.">
        <title>WDR11, a WD protein that interacts with transcription factor EMX1, is mutated in idiopathic hypogonadotropic hypogonadism and Kallmann syndrome.</title>
        <authorList>
            <person name="Kim H.G."/>
            <person name="Ahn J.W."/>
            <person name="Kurth I."/>
            <person name="Ullmann R."/>
            <person name="Kim H.T."/>
            <person name="Kulharya A."/>
            <person name="Ha K.S."/>
            <person name="Itokawa Y."/>
            <person name="Meliciani I."/>
            <person name="Wenzel W."/>
            <person name="Lee D."/>
            <person name="Rosenberger G."/>
            <person name="Ozata M."/>
            <person name="Bick D.P."/>
            <person name="Sherins R.J."/>
            <person name="Nagase T."/>
            <person name="Tekin M."/>
            <person name="Kim S.H."/>
            <person name="Kim C.H."/>
            <person name="Ropers H.H."/>
            <person name="Gusella J.F."/>
            <person name="Kalscheuer V."/>
            <person name="Choi C.Y."/>
            <person name="Layman L.C."/>
        </authorList>
    </citation>
    <scope>SUBCELLULAR LOCATION</scope>
    <scope>CHROMOSOMAL TRANSLOCATION</scope>
    <scope>INTERACTION WITH EMX1</scope>
    <scope>VARIANTS HH14 TRP-395; THR-435; GLN-448; GLN-690 AND LEU-1150</scope>
    <scope>VARIANT GLN-978</scope>
    <scope>CHARACTERIZATION OF VARIANTS HH14 TRP-395; THR-435; GLN-448; GLN-690 AND LEU-1150</scope>
</reference>
<reference key="9">
    <citation type="journal article" date="2010" name="Sci. Signal.">
        <title>Quantitative phosphoproteomics reveals widespread full phosphorylation site occupancy during mitosis.</title>
        <authorList>
            <person name="Olsen J.V."/>
            <person name="Vermeulen M."/>
            <person name="Santamaria A."/>
            <person name="Kumar C."/>
            <person name="Miller M.L."/>
            <person name="Jensen L.J."/>
            <person name="Gnad F."/>
            <person name="Cox J."/>
            <person name="Jensen T.S."/>
            <person name="Nigg E.A."/>
            <person name="Brunak S."/>
            <person name="Mann M."/>
        </authorList>
    </citation>
    <scope>IDENTIFICATION BY MASS SPECTROMETRY [LARGE SCALE ANALYSIS]</scope>
    <source>
        <tissue>Cervix carcinoma</tissue>
    </source>
</reference>
<reference key="10">
    <citation type="journal article" date="2011" name="BMC Syst. Biol.">
        <title>Initial characterization of the human central proteome.</title>
        <authorList>
            <person name="Burkard T.R."/>
            <person name="Planyavsky M."/>
            <person name="Kaupe I."/>
            <person name="Breitwieser F.P."/>
            <person name="Buerckstuemmer T."/>
            <person name="Bennett K.L."/>
            <person name="Superti-Furga G."/>
            <person name="Colinge J."/>
        </authorList>
    </citation>
    <scope>IDENTIFICATION BY MASS SPECTROMETRY [LARGE SCALE ANALYSIS]</scope>
</reference>
<reference key="11">
    <citation type="journal article" date="2013" name="J. Proteome Res.">
        <title>Toward a comprehensive characterization of a human cancer cell phosphoproteome.</title>
        <authorList>
            <person name="Zhou H."/>
            <person name="Di Palma S."/>
            <person name="Preisinger C."/>
            <person name="Peng M."/>
            <person name="Polat A.N."/>
            <person name="Heck A.J."/>
            <person name="Mohammed S."/>
        </authorList>
    </citation>
    <scope>PHOSPHORYLATION [LARGE SCALE ANALYSIS] AT SER-205 AND SER-209</scope>
    <scope>IDENTIFICATION BY MASS SPECTROMETRY [LARGE SCALE ANALYSIS]</scope>
    <source>
        <tissue>Cervix carcinoma</tissue>
        <tissue>Erythroleukemia</tissue>
    </source>
</reference>
<reference key="12">
    <citation type="journal article" date="2014" name="J. Proteomics">
        <title>An enzyme assisted RP-RPLC approach for in-depth analysis of human liver phosphoproteome.</title>
        <authorList>
            <person name="Bian Y."/>
            <person name="Song C."/>
            <person name="Cheng K."/>
            <person name="Dong M."/>
            <person name="Wang F."/>
            <person name="Huang J."/>
            <person name="Sun D."/>
            <person name="Wang L."/>
            <person name="Ye M."/>
            <person name="Zou H."/>
        </authorList>
    </citation>
    <scope>IDENTIFICATION BY MASS SPECTROMETRY [LARGE SCALE ANALYSIS]</scope>
    <source>
        <tissue>Liver</tissue>
    </source>
</reference>
<reference key="13">
    <citation type="journal article" date="2017" name="Nat. Cell Biol.">
        <title>TBC1D23 is a bridging factor for endosomal vesicle capture by golgins at the trans-Golgi.</title>
        <authorList>
            <person name="Shin J.J.H."/>
            <person name="Gillingham A.K."/>
            <person name="Begum F."/>
            <person name="Chadwick J."/>
            <person name="Munro S."/>
        </authorList>
    </citation>
    <scope>INTERACTION WITH TBC1D23</scope>
</reference>
<reference key="14">
    <citation type="journal article" date="2018" name="EMBO Rep.">
        <title>WDR11-mediated Hedgehog signalling defects underlie a new ciliopathy related to Kallmann syndrome.</title>
        <authorList>
            <person name="Kim Y.J."/>
            <person name="Osborn D.P."/>
            <person name="Lee J.Y."/>
            <person name="Araki M."/>
            <person name="Araki K."/>
            <person name="Mohun T."/>
            <person name="Kaensaekoski J."/>
            <person name="Brandstack N."/>
            <person name="Kim H.T."/>
            <person name="Miralles F."/>
            <person name="Kim C.H."/>
            <person name="Brown N.A."/>
            <person name="Kim H.G."/>
            <person name="Martinez-Barbera J.P."/>
            <person name="Ataliotis P."/>
            <person name="Raivio T."/>
            <person name="Layman L.C."/>
            <person name="Kim S.H."/>
        </authorList>
    </citation>
    <scope>FUNCTION</scope>
    <scope>SUBCELLULAR LOCATION</scope>
    <scope>INTERACTION WITH EMX1 AND GLI3</scope>
    <scope>VARIANT HH14 LEU-537</scope>
    <scope>CHARACTERIZATION OF VARIANTS HH14 TRP-395; THR-435; GLN-448; LEU-537; GLN-690 AND LEU-1150</scope>
</reference>
<reference key="15">
    <citation type="journal article" date="2018" name="Nat. Commun.">
        <title>The WDR11 complex facilitates the tethering of AP-1-derived vesicles.</title>
        <authorList>
            <person name="Navarro Negredo P."/>
            <person name="Edgar J.R."/>
            <person name="Manna P.T."/>
            <person name="Antrobus R."/>
            <person name="Robinson M.S."/>
        </authorList>
    </citation>
    <scope>FUNCTION</scope>
    <scope>SUBCELLULAR LOCATION</scope>
    <scope>IDENTIFICATION IN A COMPLEX WITH FAM91A1 AND C17ORF75</scope>
</reference>
<reference key="16">
    <citation type="journal article" date="2021" name="Eur. J. Hum. Genet.">
        <title>Biallelic loss-of-function variants in WDR11 are associated with microcephaly and intellectual disability.</title>
        <authorList>
            <person name="Haag N."/>
            <person name="Tan E.C."/>
            <person name="Begemann M."/>
            <person name="Buschmann L."/>
            <person name="Kraft F."/>
            <person name="Holschbach P."/>
            <person name="Lai A.H.M."/>
            <person name="Brett M."/>
            <person name="Mochida G.H."/>
            <person name="DiTroia S."/>
            <person name="Pais L."/>
            <person name="Neil J.E."/>
            <person name="Al-Saffar M."/>
            <person name="Bastaki L."/>
            <person name="Walsh C.A."/>
            <person name="Kurth I."/>
            <person name="Knopp C."/>
        </authorList>
    </citation>
    <scope>VARIANT MRT78 419-GLN--GLU-1224 DEL</scope>
    <scope>CHARACTERIZATION OF VARIANT MRT78 419-GLN--GLU-1224 DEL</scope>
    <scope>INVOLVEMENT IN MRT78</scope>
    <scope>SUBCELLULAR LOCATION</scope>
</reference>
<sequence length="1224" mass="136685">MLPYTVNFKVSARTLTGALNAHNKAAVDWGWQGLIAYGCHSLVVVIDSITAQTLQVLEKHKADVVKVKWARENYHHNIGSPYCLRLASADVNGKIIVWDVAAGVAQCEIQEHAKPIQDVQWLWNQDASRDLLLAIHPPNYIVLWNADTGTKLWKKSYADNILSFSFDPFDPSHLTLLTSEGIVFISDFSPSKPPSGPGKKVYISSPHSSPAHNKLATATGAKKALNKVKILITQEKPSAEFITLNDCLQLAYLPSKRNHMLLLYPREILILDLEVNQTVGVIAIERTGVPFLQVIPCFQRDGLFCLHENGCITLRVRRSYNNIFTTSNEEPDPDPVQELTYDLRSQCDAIRVTKTVRPFSMVCCPVNENAAALVVSDGRVMIWELKSAVCNRNSRNSSSGVSPLYSPVSFCGIPVGVLQNKLPDLSLDNMIGQSAIAGEEHPRGSILREVHLKFLLTGLLSGLPAPQFAIRMCPPLTTKNIKMYQPLLAVGTSNGSVLVYHLTSGLLHKELSIHSCEVKGIEWTSLTSFLSFATSTPNNMGLVRNELQLVDLPTGRSIAFRGERGNDESAIEMIKVSHLKQYLAVVFRDKPLELWDVRTCTLLREMSKNFPTITALEWSPSHNLKSLRKKQLATREAMARQTVVSDTELSIVESSVISLLQEAESKSELSQNISAREHFVFTDIDGQVYHLTVEGNSVKDSARIPPDGSMGSITCIAWKGDTLVLGDMDGNLNFWDLKGRVSRGIPTHRSWVRKIRFAPGKGNQKLIAMYNDGAEVWDTKEVQMVSSLRSGRNVTFRILDVDWCTSDKVILASDDGCIRVLEMSMKSACFRMDEQELTEPVWCPYLLVPRASLALKAFLLHQPWNGQYSLDISHVDYPENEEIKNLLQEQLNSLSNDIKKLLLDPEFTLLQRCLLVSRLYGDESELHFWTVAAHYLHSLSQEKSASTTAPKEAAPRDKLSNPLDICYDVLCENAYFQKFQLERVNLQEVKRSTYDHTRKCTDQLLLLGQTDRAVQLLLETSADNQHYYCDSLKACLVTTVTSSGPSQSTIKLVATNMIANGKLAEGVQLLCLIDKAADACRYLQTYGEWNRAAWLAKVRLNPEECADVLRRWVDHLCSPQVNQKSKALLVLLSLGCFFSVAETLHSMRYFDRAALFVEACLKYGAFEVTEDTEKLITAIYADYARSLKNLGFKQGAVLFASKAGAAGKDLLNELESPKEEPIEE</sequence>
<proteinExistence type="evidence at protein level"/>
<name>WDR11_HUMAN</name>
<protein>
    <recommendedName>
        <fullName>WD repeat-containing protein 11</fullName>
    </recommendedName>
    <alternativeName>
        <fullName>Bromodomain and WD repeat-containing protein 2</fullName>
    </alternativeName>
    <alternativeName>
        <fullName>WD repeat-containing protein 15</fullName>
    </alternativeName>
</protein>
<dbReference type="EMBL" id="AF320223">
    <property type="protein sequence ID" value="AAK08064.1"/>
    <property type="molecule type" value="mRNA"/>
</dbReference>
<dbReference type="EMBL" id="AB037772">
    <property type="protein sequence ID" value="BAA92589.2"/>
    <property type="status" value="ALT_INIT"/>
    <property type="molecule type" value="mRNA"/>
</dbReference>
<dbReference type="EMBL" id="AC010998">
    <property type="status" value="NOT_ANNOTATED_CDS"/>
    <property type="molecule type" value="Genomic_DNA"/>
</dbReference>
<dbReference type="EMBL" id="AL391425">
    <property type="status" value="NOT_ANNOTATED_CDS"/>
    <property type="molecule type" value="Genomic_DNA"/>
</dbReference>
<dbReference type="EMBL" id="BC040469">
    <property type="protein sequence ID" value="AAH40469.1"/>
    <property type="molecule type" value="mRNA"/>
</dbReference>
<dbReference type="EMBL" id="BC071564">
    <property type="protein sequence ID" value="AAH71564.1"/>
    <property type="molecule type" value="mRNA"/>
</dbReference>
<dbReference type="CCDS" id="CCDS7619.1"/>
<dbReference type="RefSeq" id="NP_060587.8">
    <property type="nucleotide sequence ID" value="NM_018117.11"/>
</dbReference>
<dbReference type="PDB" id="8XFB">
    <property type="method" value="EM"/>
    <property type="resolution" value="3.40 A"/>
    <property type="chains" value="B/D=1-1224"/>
</dbReference>
<dbReference type="PDB" id="8Z9M">
    <property type="method" value="EM"/>
    <property type="resolution" value="3.30 A"/>
    <property type="chains" value="B/D=1-1224"/>
</dbReference>
<dbReference type="PDBsum" id="8XFB"/>
<dbReference type="PDBsum" id="8Z9M"/>
<dbReference type="EMDB" id="EMD-38300"/>
<dbReference type="EMDB" id="EMD-39863"/>
<dbReference type="EMDB" id="EMD-39943"/>
<dbReference type="EMDB" id="EMD-39947"/>
<dbReference type="EMDB" id="EMD-39949"/>
<dbReference type="SMR" id="Q9BZH6"/>
<dbReference type="BioGRID" id="120839">
    <property type="interactions" value="158"/>
</dbReference>
<dbReference type="CORUM" id="Q9BZH6"/>
<dbReference type="FunCoup" id="Q9BZH6">
    <property type="interactions" value="2249"/>
</dbReference>
<dbReference type="IntAct" id="Q9BZH6">
    <property type="interactions" value="58"/>
</dbReference>
<dbReference type="MINT" id="Q9BZH6"/>
<dbReference type="STRING" id="9606.ENSP00000263461"/>
<dbReference type="GlyGen" id="Q9BZH6">
    <property type="glycosylation" value="1 site, 1 O-linked glycan (1 site)"/>
</dbReference>
<dbReference type="iPTMnet" id="Q9BZH6"/>
<dbReference type="PhosphoSitePlus" id="Q9BZH6"/>
<dbReference type="SwissPalm" id="Q9BZH6"/>
<dbReference type="BioMuta" id="WDR11"/>
<dbReference type="DMDM" id="17368715"/>
<dbReference type="jPOST" id="Q9BZH6"/>
<dbReference type="MassIVE" id="Q9BZH6"/>
<dbReference type="PaxDb" id="9606-ENSP00000263461"/>
<dbReference type="PeptideAtlas" id="Q9BZH6"/>
<dbReference type="ProteomicsDB" id="79847"/>
<dbReference type="Pumba" id="Q9BZH6"/>
<dbReference type="Antibodypedia" id="50226">
    <property type="antibodies" value="98 antibodies from 20 providers"/>
</dbReference>
<dbReference type="DNASU" id="55717"/>
<dbReference type="Ensembl" id="ENST00000263461.11">
    <property type="protein sequence ID" value="ENSP00000263461.5"/>
    <property type="gene ID" value="ENSG00000120008.16"/>
</dbReference>
<dbReference type="GeneID" id="55717"/>
<dbReference type="KEGG" id="hsa:55717"/>
<dbReference type="MANE-Select" id="ENST00000263461.11">
    <property type="protein sequence ID" value="ENSP00000263461.5"/>
    <property type="RefSeq nucleotide sequence ID" value="NM_018117.12"/>
    <property type="RefSeq protein sequence ID" value="NP_060587.8"/>
</dbReference>
<dbReference type="UCSC" id="uc021pzt.2">
    <property type="organism name" value="human"/>
</dbReference>
<dbReference type="AGR" id="HGNC:13831"/>
<dbReference type="CTD" id="55717"/>
<dbReference type="DisGeNET" id="55717"/>
<dbReference type="GeneCards" id="WDR11"/>
<dbReference type="GeneReviews" id="WDR11"/>
<dbReference type="HGNC" id="HGNC:13831">
    <property type="gene designation" value="WDR11"/>
</dbReference>
<dbReference type="HPA" id="ENSG00000120008">
    <property type="expression patterns" value="Low tissue specificity"/>
</dbReference>
<dbReference type="MalaCards" id="WDR11"/>
<dbReference type="MIM" id="606417">
    <property type="type" value="gene"/>
</dbReference>
<dbReference type="MIM" id="614858">
    <property type="type" value="phenotype"/>
</dbReference>
<dbReference type="MIM" id="620237">
    <property type="type" value="phenotype"/>
</dbReference>
<dbReference type="neXtProt" id="NX_Q9BZH6"/>
<dbReference type="OpenTargets" id="ENSG00000120008"/>
<dbReference type="Orphanet" id="478">
    <property type="disease" value="Kallmann syndrome"/>
</dbReference>
<dbReference type="Orphanet" id="432">
    <property type="disease" value="Normosmic congenital hypogonadotropic hypogonadism"/>
</dbReference>
<dbReference type="Orphanet" id="95496">
    <property type="disease" value="Pituitary stalk interruption syndrome"/>
</dbReference>
<dbReference type="PharmGKB" id="PA37818"/>
<dbReference type="VEuPathDB" id="HostDB:ENSG00000120008"/>
<dbReference type="eggNOG" id="KOG1912">
    <property type="taxonomic scope" value="Eukaryota"/>
</dbReference>
<dbReference type="GeneTree" id="ENSGT00390000004068"/>
<dbReference type="HOGENOM" id="CLU_005717_1_0_1"/>
<dbReference type="InParanoid" id="Q9BZH6"/>
<dbReference type="OMA" id="WDTKEIQ"/>
<dbReference type="OrthoDB" id="1291858at2759"/>
<dbReference type="PAN-GO" id="Q9BZH6">
    <property type="GO annotations" value="1 GO annotation based on evolutionary models"/>
</dbReference>
<dbReference type="PhylomeDB" id="Q9BZH6"/>
<dbReference type="TreeFam" id="TF314830"/>
<dbReference type="PathwayCommons" id="Q9BZH6"/>
<dbReference type="Reactome" id="R-HSA-9013407">
    <property type="pathway name" value="RHOH GTPase cycle"/>
</dbReference>
<dbReference type="SignaLink" id="Q9BZH6"/>
<dbReference type="BioGRID-ORCS" id="55717">
    <property type="hits" value="12 hits in 1166 CRISPR screens"/>
</dbReference>
<dbReference type="ChiTaRS" id="WDR11">
    <property type="organism name" value="human"/>
</dbReference>
<dbReference type="GeneWiki" id="BRWD2"/>
<dbReference type="GenomeRNAi" id="55717"/>
<dbReference type="Pharos" id="Q9BZH6">
    <property type="development level" value="Tbio"/>
</dbReference>
<dbReference type="PRO" id="PR:Q9BZH6"/>
<dbReference type="Proteomes" id="UP000005640">
    <property type="component" value="Chromosome 10"/>
</dbReference>
<dbReference type="RNAct" id="Q9BZH6">
    <property type="molecule type" value="protein"/>
</dbReference>
<dbReference type="Bgee" id="ENSG00000120008">
    <property type="expression patterns" value="Expressed in epithelium of nasopharynx and 198 other cell types or tissues"/>
</dbReference>
<dbReference type="ExpressionAtlas" id="Q9BZH6">
    <property type="expression patterns" value="baseline and differential"/>
</dbReference>
<dbReference type="GO" id="GO:0005930">
    <property type="term" value="C:axoneme"/>
    <property type="evidence" value="ECO:0000250"/>
    <property type="project" value="UniProtKB"/>
</dbReference>
<dbReference type="GO" id="GO:0036064">
    <property type="term" value="C:ciliary basal body"/>
    <property type="evidence" value="ECO:0000314"/>
    <property type="project" value="UniProtKB"/>
</dbReference>
<dbReference type="GO" id="GO:0005929">
    <property type="term" value="C:cilium"/>
    <property type="evidence" value="ECO:0000314"/>
    <property type="project" value="HPA"/>
</dbReference>
<dbReference type="GO" id="GO:0005737">
    <property type="term" value="C:cytoplasm"/>
    <property type="evidence" value="ECO:0000314"/>
    <property type="project" value="MGI"/>
</dbReference>
<dbReference type="GO" id="GO:0031410">
    <property type="term" value="C:cytoplasmic vesicle"/>
    <property type="evidence" value="ECO:0000314"/>
    <property type="project" value="UniProtKB"/>
</dbReference>
<dbReference type="GO" id="GO:0005829">
    <property type="term" value="C:cytosol"/>
    <property type="evidence" value="ECO:0000314"/>
    <property type="project" value="HPA"/>
</dbReference>
<dbReference type="GO" id="GO:0043231">
    <property type="term" value="C:intracellular membrane-bounded organelle"/>
    <property type="evidence" value="ECO:0000314"/>
    <property type="project" value="HPA"/>
</dbReference>
<dbReference type="GO" id="GO:0005765">
    <property type="term" value="C:lysosomal membrane"/>
    <property type="evidence" value="ECO:0007005"/>
    <property type="project" value="UniProtKB"/>
</dbReference>
<dbReference type="GO" id="GO:0016020">
    <property type="term" value="C:membrane"/>
    <property type="evidence" value="ECO:0007005"/>
    <property type="project" value="UniProtKB"/>
</dbReference>
<dbReference type="GO" id="GO:0015630">
    <property type="term" value="C:microtubule cytoskeleton"/>
    <property type="evidence" value="ECO:0000314"/>
    <property type="project" value="HPA"/>
</dbReference>
<dbReference type="GO" id="GO:0005634">
    <property type="term" value="C:nucleus"/>
    <property type="evidence" value="ECO:0000314"/>
    <property type="project" value="UniProtKB"/>
</dbReference>
<dbReference type="GO" id="GO:0005886">
    <property type="term" value="C:plasma membrane"/>
    <property type="evidence" value="ECO:0000314"/>
    <property type="project" value="HPA"/>
</dbReference>
<dbReference type="GO" id="GO:0005802">
    <property type="term" value="C:trans-Golgi network"/>
    <property type="evidence" value="ECO:0000314"/>
    <property type="project" value="UniProtKB"/>
</dbReference>
<dbReference type="GO" id="GO:0060271">
    <property type="term" value="P:cilium assembly"/>
    <property type="evidence" value="ECO:0000250"/>
    <property type="project" value="UniProtKB"/>
</dbReference>
<dbReference type="GO" id="GO:0060322">
    <property type="term" value="P:head development"/>
    <property type="evidence" value="ECO:0000250"/>
    <property type="project" value="UniProtKB"/>
</dbReference>
<dbReference type="GO" id="GO:0007507">
    <property type="term" value="P:heart development"/>
    <property type="evidence" value="ECO:0000250"/>
    <property type="project" value="UniProtKB"/>
</dbReference>
<dbReference type="GO" id="GO:0006886">
    <property type="term" value="P:intracellular protein transport"/>
    <property type="evidence" value="ECO:0000314"/>
    <property type="project" value="UniProtKB"/>
</dbReference>
<dbReference type="GO" id="GO:0035264">
    <property type="term" value="P:multicellular organism growth"/>
    <property type="evidence" value="ECO:0000250"/>
    <property type="project" value="UniProtKB"/>
</dbReference>
<dbReference type="GO" id="GO:0008589">
    <property type="term" value="P:regulation of smoothened signaling pathway"/>
    <property type="evidence" value="ECO:0000250"/>
    <property type="project" value="UniProtKB"/>
</dbReference>
<dbReference type="GO" id="GO:0099041">
    <property type="term" value="P:vesicle tethering to Golgi"/>
    <property type="evidence" value="ECO:0000314"/>
    <property type="project" value="UniProtKB"/>
</dbReference>
<dbReference type="FunFam" id="2.130.10.10:FF:001311">
    <property type="entry name" value="Bromodomain and WD repeat domain containing 2"/>
    <property type="match status" value="1"/>
</dbReference>
<dbReference type="FunFam" id="2.130.10.10:FF:000309">
    <property type="entry name" value="WD repeat domain 11"/>
    <property type="match status" value="1"/>
</dbReference>
<dbReference type="FunFam" id="2.130.10.10:FF:000210">
    <property type="entry name" value="WD repeat-containing protein 11 isoform X1"/>
    <property type="match status" value="1"/>
</dbReference>
<dbReference type="Gene3D" id="2.130.10.10">
    <property type="entry name" value="YVTN repeat-like/Quinoprotein amine dehydrogenase"/>
    <property type="match status" value="3"/>
</dbReference>
<dbReference type="InterPro" id="IPR015943">
    <property type="entry name" value="WD40/YVTN_repeat-like_dom_sf"/>
</dbReference>
<dbReference type="InterPro" id="IPR019775">
    <property type="entry name" value="WD40_repeat_CS"/>
</dbReference>
<dbReference type="InterPro" id="IPR036322">
    <property type="entry name" value="WD40_repeat_dom_sf"/>
</dbReference>
<dbReference type="InterPro" id="IPR001680">
    <property type="entry name" value="WD40_rpt"/>
</dbReference>
<dbReference type="InterPro" id="IPR039694">
    <property type="entry name" value="WDR11"/>
</dbReference>
<dbReference type="PANTHER" id="PTHR14593">
    <property type="entry name" value="WD REPEAT-CONTAINING PROTEIN 11"/>
    <property type="match status" value="1"/>
</dbReference>
<dbReference type="PANTHER" id="PTHR14593:SF5">
    <property type="entry name" value="WD REPEAT-CONTAINING PROTEIN 11"/>
    <property type="match status" value="1"/>
</dbReference>
<dbReference type="Pfam" id="PF23751">
    <property type="entry name" value="Beta-prop_WDR11_1st"/>
    <property type="match status" value="1"/>
</dbReference>
<dbReference type="Pfam" id="PF23752">
    <property type="entry name" value="Beta-prop_WDR11_2nd"/>
    <property type="match status" value="1"/>
</dbReference>
<dbReference type="Pfam" id="PF23753">
    <property type="entry name" value="TPR_WDR11"/>
    <property type="match status" value="1"/>
</dbReference>
<dbReference type="SMART" id="SM00320">
    <property type="entry name" value="WD40"/>
    <property type="match status" value="6"/>
</dbReference>
<dbReference type="SUPFAM" id="SSF50978">
    <property type="entry name" value="WD40 repeat-like"/>
    <property type="match status" value="2"/>
</dbReference>
<dbReference type="PROSITE" id="PS00678">
    <property type="entry name" value="WD_REPEATS_1"/>
    <property type="match status" value="3"/>
</dbReference>
<evidence type="ECO:0000250" key="1">
    <source>
        <dbReference type="UniProtKB" id="Q8K1X1"/>
    </source>
</evidence>
<evidence type="ECO:0000269" key="2">
    <source>
    </source>
</evidence>
<evidence type="ECO:0000269" key="3">
    <source>
    </source>
</evidence>
<evidence type="ECO:0000269" key="4">
    <source>
    </source>
</evidence>
<evidence type="ECO:0000269" key="5">
    <source>
    </source>
</evidence>
<evidence type="ECO:0000269" key="6">
    <source>
    </source>
</evidence>
<evidence type="ECO:0000269" key="7">
    <source>
    </source>
</evidence>
<evidence type="ECO:0000305" key="8"/>
<evidence type="ECO:0007744" key="9">
    <source>
    </source>
</evidence>
<evidence type="ECO:0007829" key="10">
    <source>
        <dbReference type="PDB" id="8XFB"/>
    </source>
</evidence>
<evidence type="ECO:0007829" key="11">
    <source>
        <dbReference type="PDB" id="8Z9M"/>
    </source>
</evidence>
<comment type="function">
    <text evidence="5 6">Involved in the Hedgehog (Hh) signaling pathway, is essential for normal ciliogenesis (PubMed:29263200). Regulates the proteolytic processing of GLI3 and cooperates with the transcription factor EMX1 in the induction of downstream Hh pathway gene expression and gonadotropin-releasing hormone production (PubMed:29263200). WDR11 complex facilitates the tethering of Adaptor protein-1 complex (AP-1)-derived vesicles. WDR11 complex acts together with TBC1D23 to facilitate the golgin-mediated capture of vesicles generated using AP-1 (PubMed:29426865).</text>
</comment>
<comment type="subunit">
    <text evidence="3 4 5 6">Component of the complex WDR11 composed of C17orf75, FAM91A1 and WDR11; FAM91A1 and WDR11 are required for proper location of the complex (PubMed:29426865). Interacts (via the N-terminal and the central portion of the protein) with EMX1 (PubMed:20887964). Interacts with GLI3; the interaction associateS EMX1 with GLI3 (PubMed:29263200). Interacts with TBC1D23; this interaction may be indirect and recruits TBC1D23 to AP-1-derived vesicles (PubMed:29084197, PubMed:29426865).</text>
</comment>
<comment type="interaction">
    <interactant intactId="EBI-2009923">
        <id>Q9BZH6</id>
    </interactant>
    <interactant intactId="EBI-26568770">
        <id>Q04741</id>
        <label>EMX1</label>
    </interactant>
    <organismsDiffer>false</organismsDiffer>
    <experiments>2</experiments>
</comment>
<comment type="interaction">
    <interactant intactId="EBI-2009923">
        <id>Q9BZH6</id>
    </interactant>
    <interactant intactId="EBI-26568850">
        <id>PRO_0000406137</id>
        <label>GLI3</label>
        <dbReference type="UniProtKB" id="P10071"/>
    </interactant>
    <organismsDiffer>false</organismsDiffer>
    <experiments>3</experiments>
</comment>
<comment type="subcellular location">
    <subcellularLocation>
        <location evidence="5">Cytoplasm</location>
        <location evidence="5">Cytoskeleton</location>
        <location evidence="5">Cilium basal body</location>
    </subcellularLocation>
    <subcellularLocation>
        <location evidence="3">Cytoplasm</location>
    </subcellularLocation>
    <subcellularLocation>
        <location evidence="3 5">Nucleus</location>
    </subcellularLocation>
    <subcellularLocation>
        <location evidence="5">Cytoplasm</location>
        <location evidence="5">Cytoskeleton</location>
        <location evidence="5">Cilium axoneme</location>
    </subcellularLocation>
    <subcellularLocation>
        <location evidence="6">Cytoplasmic vesicle</location>
    </subcellularLocation>
    <subcellularLocation>
        <location evidence="6 7">Golgi apparatus</location>
        <location evidence="6 7">trans-Golgi network</location>
    </subcellularLocation>
    <text evidence="3 5">Shuttles from the cilium to the nucleus in response to Hh signaling (PubMed:29263200). Might be shuttling between the nucleus and the cytoplasm (PubMed:20887964).</text>
</comment>
<comment type="tissue specificity">
    <text>Ubiquitous.</text>
</comment>
<comment type="disease">
    <text evidence="2">A chromosomal aberration involving WDR11 is found in a form of glioblastoma. Translocation t(10;19)(q26;q13.3) with ZNF320.</text>
</comment>
<comment type="disease">
    <text evidence="3">A chromosomal aberration involving WDR11 is found in a form of Kallmann syndrome. Translocation 46,XY,t(10;12)(q26.12;q13.11).</text>
</comment>
<comment type="disease" evidence="3 5">
    <disease id="DI-03574">
        <name>Hypogonadotropic hypogonadism 14 with or without anosmia</name>
        <acronym>HH14</acronym>
        <description>A disorder characterized by absent or incomplete sexual maturation by the age of 18 years, in conjunction with low levels of circulating gonadotropins and testosterone and no other abnormalities of the hypothalamic-pituitary axis. In some cases, it is associated with non-reproductive phenotypes, such as anosmia, cleft palate, and sensorineural hearing loss. Anosmia or hyposmia is related to the absence or hypoplasia of the olfactory bulbs and tracts. Hypogonadism is due to deficiency in gonadotropin-releasing hormone and probably results from a failure of embryonic migration of gonadotropin-releasing hormone-synthesizing neurons. In the presence of anosmia, idiopathic hypogonadotropic hypogonadism is referred to as Kallmann syndrome, whereas in the presence of a normal sense of smell, it has been termed normosmic idiopathic hypogonadotropic hypogonadism (nIHH).</description>
        <dbReference type="MIM" id="614858"/>
    </disease>
    <text>The disease is caused by variants affecting the gene represented in this entry.</text>
</comment>
<comment type="disease" evidence="7">
    <disease id="DI-06604">
        <name>Intellectual developmental disorder, autosomal recessive 78</name>
        <acronym>MRT78</acronym>
        <description>An autosomal recessive neurodevelopmental disorder characterized by usually mild intellectual disability, microcephaly, and short stature. Additional features may include ocular abnormalities and mild skeletal defects.</description>
        <dbReference type="MIM" id="620237"/>
    </disease>
    <text>The disease is caused by variants affecting the gene represented in this entry.</text>
</comment>
<comment type="sequence caution" evidence="8">
    <conflict type="erroneous initiation">
        <sequence resource="EMBL-CDS" id="BAA92589"/>
    </conflict>
    <text>Extended N-terminus.</text>
</comment>
<gene>
    <name type="primary">WDR11</name>
    <name type="synonym">BRWD2</name>
    <name type="synonym">KIAA1351</name>
    <name type="synonym">WDR15</name>
</gene>
<organism>
    <name type="scientific">Homo sapiens</name>
    <name type="common">Human</name>
    <dbReference type="NCBI Taxonomy" id="9606"/>
    <lineage>
        <taxon>Eukaryota</taxon>
        <taxon>Metazoa</taxon>
        <taxon>Chordata</taxon>
        <taxon>Craniata</taxon>
        <taxon>Vertebrata</taxon>
        <taxon>Euteleostomi</taxon>
        <taxon>Mammalia</taxon>
        <taxon>Eutheria</taxon>
        <taxon>Euarchontoglires</taxon>
        <taxon>Primates</taxon>
        <taxon>Haplorrhini</taxon>
        <taxon>Catarrhini</taxon>
        <taxon>Hominidae</taxon>
        <taxon>Homo</taxon>
    </lineage>
</organism>
<accession>Q9BZH6</accession>
<accession>Q5VWA1</accession>
<accession>Q9P2J6</accession>